<dbReference type="SMR" id="P83271"/>
<dbReference type="iPTMnet" id="P83271"/>
<dbReference type="GO" id="GO:0072562">
    <property type="term" value="C:blood microparticle"/>
    <property type="evidence" value="ECO:0007669"/>
    <property type="project" value="TreeGrafter"/>
</dbReference>
<dbReference type="GO" id="GO:0031838">
    <property type="term" value="C:haptoglobin-hemoglobin complex"/>
    <property type="evidence" value="ECO:0007669"/>
    <property type="project" value="TreeGrafter"/>
</dbReference>
<dbReference type="GO" id="GO:0005833">
    <property type="term" value="C:hemoglobin complex"/>
    <property type="evidence" value="ECO:0000250"/>
    <property type="project" value="UniProtKB"/>
</dbReference>
<dbReference type="GO" id="GO:0031720">
    <property type="term" value="F:haptoglobin binding"/>
    <property type="evidence" value="ECO:0007669"/>
    <property type="project" value="TreeGrafter"/>
</dbReference>
<dbReference type="GO" id="GO:0020037">
    <property type="term" value="F:heme binding"/>
    <property type="evidence" value="ECO:0007669"/>
    <property type="project" value="InterPro"/>
</dbReference>
<dbReference type="GO" id="GO:0005506">
    <property type="term" value="F:iron ion binding"/>
    <property type="evidence" value="ECO:0007669"/>
    <property type="project" value="InterPro"/>
</dbReference>
<dbReference type="GO" id="GO:0043177">
    <property type="term" value="F:organic acid binding"/>
    <property type="evidence" value="ECO:0007669"/>
    <property type="project" value="TreeGrafter"/>
</dbReference>
<dbReference type="GO" id="GO:0019825">
    <property type="term" value="F:oxygen binding"/>
    <property type="evidence" value="ECO:0007669"/>
    <property type="project" value="InterPro"/>
</dbReference>
<dbReference type="GO" id="GO:0005344">
    <property type="term" value="F:oxygen carrier activity"/>
    <property type="evidence" value="ECO:0000250"/>
    <property type="project" value="UniProtKB"/>
</dbReference>
<dbReference type="GO" id="GO:0004601">
    <property type="term" value="F:peroxidase activity"/>
    <property type="evidence" value="ECO:0007669"/>
    <property type="project" value="TreeGrafter"/>
</dbReference>
<dbReference type="GO" id="GO:0042744">
    <property type="term" value="P:hydrogen peroxide catabolic process"/>
    <property type="evidence" value="ECO:0007669"/>
    <property type="project" value="TreeGrafter"/>
</dbReference>
<dbReference type="GO" id="GO:0015671">
    <property type="term" value="P:oxygen transport"/>
    <property type="evidence" value="ECO:0000250"/>
    <property type="project" value="UniProtKB"/>
</dbReference>
<dbReference type="CDD" id="cd08927">
    <property type="entry name" value="Hb-alpha-like"/>
    <property type="match status" value="1"/>
</dbReference>
<dbReference type="FunFam" id="1.10.490.10:FF:000002">
    <property type="entry name" value="Hemoglobin subunit alpha"/>
    <property type="match status" value="1"/>
</dbReference>
<dbReference type="Gene3D" id="1.10.490.10">
    <property type="entry name" value="Globins"/>
    <property type="match status" value="1"/>
</dbReference>
<dbReference type="InterPro" id="IPR000971">
    <property type="entry name" value="Globin"/>
</dbReference>
<dbReference type="InterPro" id="IPR009050">
    <property type="entry name" value="Globin-like_sf"/>
</dbReference>
<dbReference type="InterPro" id="IPR012292">
    <property type="entry name" value="Globin/Proto"/>
</dbReference>
<dbReference type="InterPro" id="IPR002338">
    <property type="entry name" value="Hemoglobin_a-typ"/>
</dbReference>
<dbReference type="InterPro" id="IPR050056">
    <property type="entry name" value="Hemoglobin_oxygen_transport"/>
</dbReference>
<dbReference type="InterPro" id="IPR002339">
    <property type="entry name" value="Hemoglobin_pi"/>
</dbReference>
<dbReference type="PANTHER" id="PTHR11442">
    <property type="entry name" value="HEMOGLOBIN FAMILY MEMBER"/>
    <property type="match status" value="1"/>
</dbReference>
<dbReference type="PANTHER" id="PTHR11442:SF41">
    <property type="entry name" value="HEMOGLOBIN SUBUNIT ZETA"/>
    <property type="match status" value="1"/>
</dbReference>
<dbReference type="Pfam" id="PF00042">
    <property type="entry name" value="Globin"/>
    <property type="match status" value="1"/>
</dbReference>
<dbReference type="PRINTS" id="PR00612">
    <property type="entry name" value="ALPHAHAEM"/>
</dbReference>
<dbReference type="PRINTS" id="PR00815">
    <property type="entry name" value="PIHAEM"/>
</dbReference>
<dbReference type="SUPFAM" id="SSF46458">
    <property type="entry name" value="Globin-like"/>
    <property type="match status" value="1"/>
</dbReference>
<dbReference type="PROSITE" id="PS01033">
    <property type="entry name" value="GLOBIN"/>
    <property type="match status" value="1"/>
</dbReference>
<accession>P83271</accession>
<comment type="function">
    <text evidence="3">Involved in oxygen transport from gills to the various peripheral tissues.</text>
</comment>
<comment type="subunit">
    <text>Hb2 is a heterotetramer of two alpha-2 chains and two beta-1 chains; Hb3 is a heterotetramer of two alpha-2 chains and two beta-2 chains.</text>
</comment>
<comment type="tissue specificity">
    <text evidence="3">Red blood cells.</text>
</comment>
<comment type="miscellaneous">
    <text>Hb2 displays a low, effector-enhanced Bohr effect and no Root effect. Hb3 displays pronounced Bohr and Root effects, accompanied by strong organophosphate regulation.</text>
</comment>
<comment type="similarity">
    <text evidence="2">Belongs to the globin family.</text>
</comment>
<name>HBA2_ANAMI</name>
<evidence type="ECO:0000250" key="1"/>
<evidence type="ECO:0000255" key="2">
    <source>
        <dbReference type="PROSITE-ProRule" id="PRU00238"/>
    </source>
</evidence>
<evidence type="ECO:0000269" key="3">
    <source>
    </source>
</evidence>
<gene>
    <name type="primary">hba2</name>
</gene>
<protein>
    <recommendedName>
        <fullName>Hemoglobin subunit alpha-2</fullName>
    </recommendedName>
    <alternativeName>
        <fullName>Alpha-2-globin</fullName>
    </alternativeName>
    <alternativeName>
        <fullName>Hemoglobin alpha-2 chain</fullName>
    </alternativeName>
</protein>
<sequence length="143" mass="15685">MSLTEKDKAAVIAMWGKIHKSADAIGADALGRMLVVYPQTKTYFSHWSDLSPNSAPVKTHGKNVMSGVALAVSKIDDMTKGLMALSEQHAFQLRVDPANFKILSHCILVVIASMFPKDFTPEAHVSMDKFFCGLSLALAEKYR</sequence>
<reference key="1">
    <citation type="journal article" date="2002" name="J. Biol. Chem.">
        <title>The functionally distinct hemoglobins of the Arctic spotted wolffish Anarhichas minor.</title>
        <authorList>
            <person name="Verde C."/>
            <person name="Carratore V."/>
            <person name="Riccio A."/>
            <person name="Tamburrini M."/>
            <person name="Parisi E."/>
            <person name="Di Prisco G."/>
        </authorList>
    </citation>
    <scope>PROTEIN SEQUENCE OF 2-143</scope>
    <scope>FUNCTION</scope>
    <scope>TISSUE SPECIFICITY</scope>
    <scope>ACETYLATION AT SER-2</scope>
</reference>
<organism>
    <name type="scientific">Anarhichas minor</name>
    <name type="common">Arctic spotted wolffish</name>
    <dbReference type="NCBI Taxonomy" id="65739"/>
    <lineage>
        <taxon>Eukaryota</taxon>
        <taxon>Metazoa</taxon>
        <taxon>Chordata</taxon>
        <taxon>Craniata</taxon>
        <taxon>Vertebrata</taxon>
        <taxon>Euteleostomi</taxon>
        <taxon>Actinopterygii</taxon>
        <taxon>Neopterygii</taxon>
        <taxon>Teleostei</taxon>
        <taxon>Neoteleostei</taxon>
        <taxon>Acanthomorphata</taxon>
        <taxon>Eupercaria</taxon>
        <taxon>Perciformes</taxon>
        <taxon>Cottioidei</taxon>
        <taxon>Zoarcales</taxon>
        <taxon>Anarhichadidae</taxon>
        <taxon>Anarhichas</taxon>
    </lineage>
</organism>
<keyword id="KW-0007">Acetylation</keyword>
<keyword id="KW-0903">Direct protein sequencing</keyword>
<keyword id="KW-0349">Heme</keyword>
<keyword id="KW-0408">Iron</keyword>
<keyword id="KW-0479">Metal-binding</keyword>
<keyword id="KW-0561">Oxygen transport</keyword>
<keyword id="KW-0813">Transport</keyword>
<proteinExistence type="evidence at protein level"/>
<feature type="initiator methionine" description="Removed" evidence="1">
    <location>
        <position position="1"/>
    </location>
</feature>
<feature type="chain" id="PRO_0000052545" description="Hemoglobin subunit alpha-2">
    <location>
        <begin position="2"/>
        <end position="143"/>
    </location>
</feature>
<feature type="domain" description="Globin" evidence="2">
    <location>
        <begin position="2"/>
        <end position="143"/>
    </location>
</feature>
<feature type="binding site" evidence="2">
    <location>
        <position position="60"/>
    </location>
    <ligand>
        <name>O2</name>
        <dbReference type="ChEBI" id="CHEBI:15379"/>
    </ligand>
</feature>
<feature type="binding site" description="proximal binding residue" evidence="2">
    <location>
        <position position="89"/>
    </location>
    <ligand>
        <name>heme b</name>
        <dbReference type="ChEBI" id="CHEBI:60344"/>
    </ligand>
    <ligandPart>
        <name>Fe</name>
        <dbReference type="ChEBI" id="CHEBI:18248"/>
    </ligandPart>
</feature>
<feature type="modified residue" description="N-acetylserine" evidence="3">
    <location>
        <position position="2"/>
    </location>
</feature>